<feature type="signal peptide" evidence="1">
    <location>
        <begin position="1"/>
        <end position="20"/>
    </location>
</feature>
<feature type="chain" id="PRO_0000458176" description="UDP-glycosyltransferase FPY2" evidence="1">
    <location>
        <begin position="21"/>
        <end position="546"/>
    </location>
</feature>
<feature type="transmembrane region" description="Helical" evidence="1">
    <location>
        <begin position="517"/>
        <end position="537"/>
    </location>
</feature>
<comment type="function">
    <text evidence="2 5">UDP-glycosyltransferase; part of the gene cluster that mediates the biosynthesis of the gamma-pyrones fusapyrone (FPY) and deoxyfusapyrone (dFPY) (Ref.2). FPY is an undecaketide and thus likely synthesized by the polyketide synthase FPY1 from acetyl-CoA functioning as starter unit and the addition of 10 malonyl-CoA extender units by successive Claisen-condensations. Next to this, FPY shares some rare features: C-glycosylated 4-deoxyglucose at C-3, a gem-dimethyl group at C-13, and an alpha-beta to beta-gamma double bond shift at C-20. During FPY biosynthesis mono-C-methyl groups are transferred to the tetra-, penta-, hexa- and heptaketide, while two C-methyl groups are transferred to the nonaketide, suggesting that the CMet domain is programmed to selectively catalyze two successive C-alpha-methylation reactions of the nonaketide, while other alpha-carbons are non- or mono-methylated only. While the origin of the 4'-deoxyglucose moiety remains opaque, its transfer to C-3 is most likely mediated by the C-glycosyltransferase FPY2. Next to this, the hydroxyl group present at C-33 and discriminating between FPY and dFPY, is likely to be installed by the cytochrome P450 monooxygenase FPY7. No putative function can be predicted for the remaining genes FPY3-FPY6 (Probable).</text>
</comment>
<comment type="pathway">
    <text evidence="5">Secondary metabolite biosynthesis.</text>
</comment>
<comment type="subcellular location">
    <subcellularLocation>
        <location evidence="1">Membrane</location>
        <topology evidence="1">Single-pass membrane protein</topology>
    </subcellularLocation>
</comment>
<comment type="induction">
    <text evidence="2">Expression is induced in the presence of 6mM glutamine.</text>
</comment>
<comment type="similarity">
    <text evidence="4">Belongs to the glycosyltransferase 28 family.</text>
</comment>
<gene>
    <name evidence="3" type="primary">FPY2</name>
    <name type="ORF">FMAN_00007</name>
</gene>
<name>FPY2_FUSMA</name>
<sequence length="546" mass="62050">MSLPKAQILVVVTVGGSTNSAPILEICSILAARGHTIDFATLSGRQKLVDNYPFVKKVHIVGPAISAEEDEKHYILFSRWNWNTARGKRDIVKGKMAFDAFWPFTYRGLKEVITTTKPDFIFSDFHVEAALDVCNEFRLPHAVMWPQMPWLMMPQKYIPGQPGMQQRCLTSEHASIYDRLFEMTFLLRSAPFFLHWIFWTKAMRRKEGVAPRPRHSKPDYLVFMNNFYGMETPRDTPPLVHPVGPILADSYPALDGDIKSFVETHQKIALVAFGTHVILDDGKIFKIIDGLADAISSGVIDGVVWALSARSRGQLDTSIRVPSLHLSHLTIDQLFKNQDQAWHFATWVPQRSVLEHDSTIIFVTHAGPSSVNESIFHGVPMVAMGIFGDQMVTTLRLERSGVAVRLDKETFDAASLTTAIRTILLFDKESFQRNVKRMKRIAMVGSRKKHFAANVIEEHLYDWDGRFENSILDLKACSNRKRGFLQASNSKDMYPRGKELRPMHLQTPDVRMSWIKLNNIDVALLFFILLGIISWITRAAANMVRL</sequence>
<keyword id="KW-0328">Glycosyltransferase</keyword>
<keyword id="KW-0472">Membrane</keyword>
<keyword id="KW-0732">Signal</keyword>
<keyword id="KW-0808">Transferase</keyword>
<keyword id="KW-0812">Transmembrane</keyword>
<keyword id="KW-1133">Transmembrane helix</keyword>
<reference key="1">
    <citation type="journal article" date="2016" name="Genome Biol. Evol.">
        <title>Comparative 'omics' of the Fusarium fujikuroi species complex highlights differences in genetic potential and metabolite synthesis.</title>
        <authorList>
            <person name="Niehaus E.-M."/>
            <person name="Muensterkoetter M."/>
            <person name="Proctor R.H."/>
            <person name="Brown D.W."/>
            <person name="Sharon A."/>
            <person name="Idan Y."/>
            <person name="Oren-Young L."/>
            <person name="Sieber C.M."/>
            <person name="Novak O."/>
            <person name="Pencik A."/>
            <person name="Tarkowska D."/>
            <person name="Hromadova K."/>
            <person name="Freeman S."/>
            <person name="Maymon M."/>
            <person name="Elazar M."/>
            <person name="Youssef S.A."/>
            <person name="El-Shabrawy E.S.M."/>
            <person name="Shalaby A.B.A."/>
            <person name="Houterman P."/>
            <person name="Brock N.L."/>
            <person name="Burkhardt I."/>
            <person name="Tsavkelova E.A."/>
            <person name="Dickschat J.S."/>
            <person name="Galuszka P."/>
            <person name="Gueldener U."/>
            <person name="Tudzynski B."/>
        </authorList>
    </citation>
    <scope>NUCLEOTIDE SEQUENCE [LARGE SCALE GENOMIC DNA]</scope>
    <source>
        <strain>MRC7560</strain>
    </source>
</reference>
<reference key="2">
    <citation type="journal article" date="2021" name="Front. Fungal Biol.">
        <title>Biosynthesis of fusapyrone depends on the H3K9 methyltransferase, FmKmt1, in Fusarium mangiferae.</title>
        <authorList>
            <person name="Atanasoff-Kardjalieff A.K."/>
            <person name="Luenne F."/>
            <person name="Kalinina S."/>
            <person name="Strauss J."/>
            <person name="Humpf H.U."/>
            <person name="Studt-Reinhold L."/>
        </authorList>
    </citation>
    <scope>FUNCTION</scope>
    <scope>INDUCTION</scope>
</reference>
<proteinExistence type="evidence at transcript level"/>
<organism>
    <name type="scientific">Fusarium mangiferae</name>
    <name type="common">Mango malformation disease fungus</name>
    <dbReference type="NCBI Taxonomy" id="192010"/>
    <lineage>
        <taxon>Eukaryota</taxon>
        <taxon>Fungi</taxon>
        <taxon>Dikarya</taxon>
        <taxon>Ascomycota</taxon>
        <taxon>Pezizomycotina</taxon>
        <taxon>Sordariomycetes</taxon>
        <taxon>Hypocreomycetidae</taxon>
        <taxon>Hypocreales</taxon>
        <taxon>Nectriaceae</taxon>
        <taxon>Fusarium</taxon>
        <taxon>Fusarium fujikuroi species complex</taxon>
    </lineage>
</organism>
<accession>A0A1L7U2E9</accession>
<evidence type="ECO:0000255" key="1"/>
<evidence type="ECO:0000269" key="2">
    <source ref="2"/>
</evidence>
<evidence type="ECO:0000303" key="3">
    <source ref="2"/>
</evidence>
<evidence type="ECO:0000305" key="4"/>
<evidence type="ECO:0000305" key="5">
    <source ref="2"/>
</evidence>
<dbReference type="EC" id="2.4.1.-" evidence="5"/>
<dbReference type="EMBL" id="FCQH01000013">
    <property type="protein sequence ID" value="CVL02473.1"/>
    <property type="molecule type" value="Genomic_DNA"/>
</dbReference>
<dbReference type="SMR" id="A0A1L7U2E9"/>
<dbReference type="VEuPathDB" id="FungiDB:FMAN_00007"/>
<dbReference type="Proteomes" id="UP000184255">
    <property type="component" value="Unassembled WGS sequence"/>
</dbReference>
<dbReference type="GO" id="GO:0016020">
    <property type="term" value="C:membrane"/>
    <property type="evidence" value="ECO:0007669"/>
    <property type="project" value="UniProtKB-SubCell"/>
</dbReference>
<dbReference type="GO" id="GO:0008194">
    <property type="term" value="F:UDP-glycosyltransferase activity"/>
    <property type="evidence" value="ECO:0007669"/>
    <property type="project" value="InterPro"/>
</dbReference>
<dbReference type="CDD" id="cd03784">
    <property type="entry name" value="GT1_Gtf-like"/>
    <property type="match status" value="1"/>
</dbReference>
<dbReference type="Gene3D" id="3.40.50.2000">
    <property type="entry name" value="Glycogen Phosphorylase B"/>
    <property type="match status" value="2"/>
</dbReference>
<dbReference type="InterPro" id="IPR050271">
    <property type="entry name" value="UDP-glycosyltransferase"/>
</dbReference>
<dbReference type="InterPro" id="IPR002213">
    <property type="entry name" value="UDP_glucos_trans"/>
</dbReference>
<dbReference type="PANTHER" id="PTHR48043">
    <property type="entry name" value="EG:EG0003.4 PROTEIN-RELATED"/>
    <property type="match status" value="1"/>
</dbReference>
<dbReference type="PANTHER" id="PTHR48043:SF145">
    <property type="entry name" value="FI06409P-RELATED"/>
    <property type="match status" value="1"/>
</dbReference>
<dbReference type="Pfam" id="PF00201">
    <property type="entry name" value="UDPGT"/>
    <property type="match status" value="1"/>
</dbReference>
<dbReference type="SUPFAM" id="SSF53756">
    <property type="entry name" value="UDP-Glycosyltransferase/glycogen phosphorylase"/>
    <property type="match status" value="1"/>
</dbReference>
<protein>
    <recommendedName>
        <fullName evidence="3">UDP-glycosyltransferase FPY2</fullName>
        <ecNumber evidence="5">2.4.1.-</ecNumber>
    </recommendedName>
    <alternativeName>
        <fullName evidence="3">Fusapyrone biosynthesis cluster protein 2</fullName>
    </alternativeName>
</protein>